<evidence type="ECO:0000255" key="1"/>
<evidence type="ECO:0000256" key="2">
    <source>
        <dbReference type="SAM" id="MobiDB-lite"/>
    </source>
</evidence>
<evidence type="ECO:0000269" key="3">
    <source>
    </source>
</evidence>
<evidence type="ECO:0000305" key="4"/>
<evidence type="ECO:0000305" key="5">
    <source>
    </source>
</evidence>
<protein>
    <recommendedName>
        <fullName>Probable alpha-(1-&gt;6)-mannopyranosyltransferase MSMEG_3120/MSMEI_3041</fullName>
        <ecNumber>2.4.1.-</ecNumber>
    </recommendedName>
</protein>
<keyword id="KW-0328">Glycosyltransferase</keyword>
<keyword id="KW-0472">Membrane</keyword>
<keyword id="KW-1185">Reference proteome</keyword>
<keyword id="KW-0808">Transferase</keyword>
<keyword id="KW-0812">Transmembrane</keyword>
<keyword id="KW-1133">Transmembrane helix</keyword>
<name>Y3120_MYCS2</name>
<sequence>MMASRLSSFSSSIARWHGDEHAVASPLDDAEILSMRRTRLFGATGTVLMAIGALGAGARPVVQDPTFGVRLLNLPSRIQTVSLTMTTTGAVMMALAWLMLGRYTLGKRRMSRSQLDHTLMLWTVPLLIAPPMYSRDVYSYLAQSEIAVLGLDPYRVGPATGLGLDHVFTLSVPNLWRETPAPYGPLFLWIGQGISALTGENIVEAVMCHRLVVLIGVGLIVWATPRLARRCGVAEVSALWLGPCNPLLFMHLVAGIHNEALMLGLMLAGTEFALRGIDAAQPLLPRPLAWPSSRAQWQRWQPMAMLVLGAVLIAMSSQVKLPSLLALGFVAMALAWRWGGTVKAFVISCTSLGAISLAVMAVIGWASGLGFGWLFTLGTANVVRSWMSPPTLIALGTGQVGILLGLGDHTTAVLGLTRAIGVFMISILVSWLLFAVLRGRLHPVGGLGVALGGTVLLFPVVQPWYLLWAIIPLAAWATRPGFRGATIAITLIVGIFGPTANGDRFTLFQIVMATLASAVTVLLLIALTYRRLPWRPAPEPPARPPEQPAPADDAYAESP</sequence>
<gene>
    <name type="ordered locus">MSMEG_3120</name>
    <name type="ordered locus">MSMEI_3041</name>
</gene>
<accession>A0QWZ7</accession>
<accession>I7FDB7</accession>
<feature type="chain" id="PRO_0000420595" description="Probable alpha-(1-&gt;6)-mannopyranosyltransferase MSMEG_3120/MSMEI_3041">
    <location>
        <begin position="1"/>
        <end position="559"/>
    </location>
</feature>
<feature type="transmembrane region" description="Helical" evidence="1">
    <location>
        <begin position="41"/>
        <end position="61"/>
    </location>
</feature>
<feature type="transmembrane region" description="Helical" evidence="1">
    <location>
        <begin position="81"/>
        <end position="101"/>
    </location>
</feature>
<feature type="transmembrane region" description="Helical" evidence="1">
    <location>
        <begin position="202"/>
        <end position="222"/>
    </location>
</feature>
<feature type="transmembrane region" description="Helical" evidence="1">
    <location>
        <begin position="247"/>
        <end position="267"/>
    </location>
</feature>
<feature type="transmembrane region" description="Helical" evidence="1">
    <location>
        <begin position="300"/>
        <end position="316"/>
    </location>
</feature>
<feature type="transmembrane region" description="Helical" evidence="1">
    <location>
        <begin position="321"/>
        <end position="340"/>
    </location>
</feature>
<feature type="transmembrane region" description="Helical" evidence="1">
    <location>
        <begin position="355"/>
        <end position="375"/>
    </location>
</feature>
<feature type="transmembrane region" description="Helical" evidence="1">
    <location>
        <begin position="386"/>
        <end position="406"/>
    </location>
</feature>
<feature type="transmembrane region" description="Helical" evidence="1">
    <location>
        <begin position="419"/>
        <end position="439"/>
    </location>
</feature>
<feature type="transmembrane region" description="Helical" evidence="1">
    <location>
        <begin position="455"/>
        <end position="475"/>
    </location>
</feature>
<feature type="transmembrane region" description="Helical" evidence="1">
    <location>
        <begin position="480"/>
        <end position="500"/>
    </location>
</feature>
<feature type="transmembrane region" description="Helical" evidence="1">
    <location>
        <begin position="507"/>
        <end position="527"/>
    </location>
</feature>
<feature type="region of interest" description="Disordered" evidence="2">
    <location>
        <begin position="535"/>
        <end position="559"/>
    </location>
</feature>
<feature type="compositionally biased region" description="Pro residues" evidence="2">
    <location>
        <begin position="535"/>
        <end position="548"/>
    </location>
</feature>
<reference key="1">
    <citation type="submission" date="2006-10" db="EMBL/GenBank/DDBJ databases">
        <authorList>
            <person name="Fleischmann R.D."/>
            <person name="Dodson R.J."/>
            <person name="Haft D.H."/>
            <person name="Merkel J.S."/>
            <person name="Nelson W.C."/>
            <person name="Fraser C.M."/>
        </authorList>
    </citation>
    <scope>NUCLEOTIDE SEQUENCE [LARGE SCALE GENOMIC DNA]</scope>
    <source>
        <strain>ATCC 700084 / mc(2)155</strain>
    </source>
</reference>
<reference key="2">
    <citation type="journal article" date="2007" name="Genome Biol.">
        <title>Interrupted coding sequences in Mycobacterium smegmatis: authentic mutations or sequencing errors?</title>
        <authorList>
            <person name="Deshayes C."/>
            <person name="Perrodou E."/>
            <person name="Gallien S."/>
            <person name="Euphrasie D."/>
            <person name="Schaeffer C."/>
            <person name="Van-Dorsselaer A."/>
            <person name="Poch O."/>
            <person name="Lecompte O."/>
            <person name="Reyrat J.-M."/>
        </authorList>
    </citation>
    <scope>NUCLEOTIDE SEQUENCE [LARGE SCALE GENOMIC DNA]</scope>
    <source>
        <strain>ATCC 700084 / mc(2)155</strain>
    </source>
</reference>
<reference key="3">
    <citation type="journal article" date="2009" name="Genome Res.">
        <title>Ortho-proteogenomics: multiple proteomes investigation through orthology and a new MS-based protocol.</title>
        <authorList>
            <person name="Gallien S."/>
            <person name="Perrodou E."/>
            <person name="Carapito C."/>
            <person name="Deshayes C."/>
            <person name="Reyrat J.-M."/>
            <person name="Van Dorsselaer A."/>
            <person name="Poch O."/>
            <person name="Schaeffer C."/>
            <person name="Lecompte O."/>
        </authorList>
    </citation>
    <scope>NUCLEOTIDE SEQUENCE [LARGE SCALE GENOMIC DNA]</scope>
    <source>
        <strain>ATCC 700084 / mc(2)155</strain>
    </source>
</reference>
<reference key="4">
    <citation type="journal article" date="2008" name="Mol. Microbiol.">
        <title>Identification of a novel alpha(1--&gt;6) mannopyranosyltransferase MptB from Corynebacterium glutamicum by deletion of a conserved gene, NCgl1505, affords a lipomannan- and lipoarabinomannan-deficient mutant.</title>
        <authorList>
            <person name="Mishra A.K."/>
            <person name="Alderwick L.J."/>
            <person name="Rittmann D."/>
            <person name="Wang C."/>
            <person name="Bhatt A."/>
            <person name="Jacobs W.R. Jr."/>
            <person name="Takayama K."/>
            <person name="Eggeling L."/>
            <person name="Besra G.S."/>
        </authorList>
    </citation>
    <scope>FUNCTION</scope>
    <scope>DISRUPTION PHENOTYPE</scope>
    <scope>SUBCELLULAR LOCATION</scope>
</reference>
<comment type="function">
    <text evidence="3">Catalyzes the addition of alpha-(1-&gt;6)-mannose residue.</text>
</comment>
<comment type="subcellular location">
    <subcellularLocation>
        <location evidence="5">Membrane</location>
        <topology evidence="4">Multi-pass membrane protein</topology>
    </subcellularLocation>
</comment>
<comment type="disruption phenotype">
    <text evidence="3">Cells lacking this gene still synthesize lipomannan (LM) and lipoarabinomannan (LAM).</text>
</comment>
<comment type="similarity">
    <text evidence="4">Belongs to the MptA/B family.</text>
</comment>
<comment type="sequence caution" evidence="4">
    <conflict type="erroneous initiation">
        <sequence resource="EMBL-CDS" id="AFP39505"/>
    </conflict>
    <text>Truncated N-terminus.</text>
</comment>
<organism>
    <name type="scientific">Mycolicibacterium smegmatis (strain ATCC 700084 / mc(2)155)</name>
    <name type="common">Mycobacterium smegmatis</name>
    <dbReference type="NCBI Taxonomy" id="246196"/>
    <lineage>
        <taxon>Bacteria</taxon>
        <taxon>Bacillati</taxon>
        <taxon>Actinomycetota</taxon>
        <taxon>Actinomycetes</taxon>
        <taxon>Mycobacteriales</taxon>
        <taxon>Mycobacteriaceae</taxon>
        <taxon>Mycolicibacterium</taxon>
    </lineage>
</organism>
<proteinExistence type="inferred from homology"/>
<dbReference type="EC" id="2.4.1.-"/>
<dbReference type="EMBL" id="CP000480">
    <property type="protein sequence ID" value="ABK73947.1"/>
    <property type="molecule type" value="Genomic_DNA"/>
</dbReference>
<dbReference type="EMBL" id="CP001663">
    <property type="protein sequence ID" value="AFP39505.1"/>
    <property type="status" value="ALT_INIT"/>
    <property type="molecule type" value="Genomic_DNA"/>
</dbReference>
<dbReference type="RefSeq" id="YP_887435.1">
    <property type="nucleotide sequence ID" value="NC_008596.1"/>
</dbReference>
<dbReference type="SMR" id="A0QWZ7"/>
<dbReference type="STRING" id="246196.MSMEG_3120"/>
<dbReference type="PaxDb" id="246196-MSMEI_3041"/>
<dbReference type="KEGG" id="msg:MSMEI_3041"/>
<dbReference type="KEGG" id="msm:MSMEG_3120"/>
<dbReference type="PATRIC" id="fig|246196.19.peg.3081"/>
<dbReference type="eggNOG" id="ENOG5032QSS">
    <property type="taxonomic scope" value="Bacteria"/>
</dbReference>
<dbReference type="OrthoDB" id="5242303at2"/>
<dbReference type="Proteomes" id="UP000000757">
    <property type="component" value="Chromosome"/>
</dbReference>
<dbReference type="Proteomes" id="UP000006158">
    <property type="component" value="Chromosome"/>
</dbReference>
<dbReference type="GO" id="GO:0016020">
    <property type="term" value="C:membrane"/>
    <property type="evidence" value="ECO:0007669"/>
    <property type="project" value="UniProtKB-SubCell"/>
</dbReference>
<dbReference type="GO" id="GO:0016757">
    <property type="term" value="F:glycosyltransferase activity"/>
    <property type="evidence" value="ECO:0007669"/>
    <property type="project" value="UniProtKB-KW"/>
</dbReference>
<dbReference type="InterPro" id="IPR049829">
    <property type="entry name" value="MptA/B-like"/>
</dbReference>
<dbReference type="NCBIfam" id="NF038066">
    <property type="entry name" value="MptB"/>
    <property type="match status" value="1"/>
</dbReference>